<protein>
    <recommendedName>
        <fullName>High osmolarity signaling protein sho1</fullName>
    </recommendedName>
    <alternativeName>
        <fullName>Osmosensor sho1</fullName>
    </alternativeName>
</protein>
<comment type="function">
    <text evidence="1">Plasma membrane osmosensor that activates the high osmolarity glycerol (HOG) MAPK signaling pathway in response to high osmolarity. Regulates radial hyphal growth and germination. Involved in virulence and mediates resistance to oxidative stress (By similarity).</text>
</comment>
<comment type="subunit">
    <text evidence="1">Forms homooligomers.</text>
</comment>
<comment type="subcellular location">
    <subcellularLocation>
        <location evidence="1">Cell membrane</location>
        <topology evidence="1">Multi-pass membrane protein</topology>
    </subcellularLocation>
</comment>
<comment type="similarity">
    <text evidence="5">Belongs to the SHO1 family.</text>
</comment>
<comment type="sequence caution" evidence="5">
    <conflict type="erroneous initiation">
        <sequence resource="EMBL-CDS" id="EDP51585"/>
    </conflict>
    <text>Extended N-terminus.</text>
</comment>
<name>SHO1_ASPFC</name>
<keyword id="KW-1003">Cell membrane</keyword>
<keyword id="KW-0325">Glycoprotein</keyword>
<keyword id="KW-0472">Membrane</keyword>
<keyword id="KW-0728">SH3 domain</keyword>
<keyword id="KW-0346">Stress response</keyword>
<keyword id="KW-0812">Transmembrane</keyword>
<keyword id="KW-1133">Transmembrane helix</keyword>
<feature type="chain" id="PRO_0000410359" description="High osmolarity signaling protein sho1">
    <location>
        <begin position="1"/>
        <end position="288"/>
    </location>
</feature>
<feature type="topological domain" description="Cytoplasmic" evidence="2">
    <location>
        <begin position="1"/>
        <end position="14"/>
    </location>
</feature>
<feature type="transmembrane region" description="Helical" evidence="2">
    <location>
        <begin position="15"/>
        <end position="35"/>
    </location>
</feature>
<feature type="topological domain" description="Extracellular" evidence="2">
    <location>
        <begin position="36"/>
        <end position="44"/>
    </location>
</feature>
<feature type="transmembrane region" description="Helical" evidence="2">
    <location>
        <begin position="45"/>
        <end position="65"/>
    </location>
</feature>
<feature type="topological domain" description="Cytoplasmic" evidence="2">
    <location>
        <begin position="66"/>
        <end position="70"/>
    </location>
</feature>
<feature type="transmembrane region" description="Helical" evidence="2">
    <location>
        <begin position="71"/>
        <end position="91"/>
    </location>
</feature>
<feature type="topological domain" description="Extracellular" evidence="2">
    <location>
        <begin position="92"/>
        <end position="103"/>
    </location>
</feature>
<feature type="transmembrane region" description="Helical" evidence="2">
    <location>
        <begin position="104"/>
        <end position="124"/>
    </location>
</feature>
<feature type="topological domain" description="Cytoplasmic" evidence="2">
    <location>
        <begin position="125"/>
        <end position="288"/>
    </location>
</feature>
<feature type="domain" description="SH3" evidence="3">
    <location>
        <begin position="229"/>
        <end position="288"/>
    </location>
</feature>
<feature type="region of interest" description="Disordered" evidence="4">
    <location>
        <begin position="183"/>
        <end position="230"/>
    </location>
</feature>
<feature type="compositionally biased region" description="Polar residues" evidence="4">
    <location>
        <begin position="197"/>
        <end position="221"/>
    </location>
</feature>
<feature type="glycosylation site" description="N-linked (GlcNAc...) asparagine" evidence="2">
    <location>
        <position position="44"/>
    </location>
</feature>
<gene>
    <name type="primary">sho1</name>
    <name type="ORF">AFUB_055960</name>
</gene>
<evidence type="ECO:0000250" key="1"/>
<evidence type="ECO:0000255" key="2"/>
<evidence type="ECO:0000255" key="3">
    <source>
        <dbReference type="PROSITE-ProRule" id="PRU00192"/>
    </source>
</evidence>
<evidence type="ECO:0000256" key="4">
    <source>
        <dbReference type="SAM" id="MobiDB-lite"/>
    </source>
</evidence>
<evidence type="ECO:0000305" key="5"/>
<proteinExistence type="inferred from homology"/>
<accession>B0Y3Z4</accession>
<organism>
    <name type="scientific">Aspergillus fumigatus (strain CBS 144.89 / FGSC A1163 / CEA10)</name>
    <name type="common">Neosartorya fumigata</name>
    <dbReference type="NCBI Taxonomy" id="451804"/>
    <lineage>
        <taxon>Eukaryota</taxon>
        <taxon>Fungi</taxon>
        <taxon>Dikarya</taxon>
        <taxon>Ascomycota</taxon>
        <taxon>Pezizomycotina</taxon>
        <taxon>Eurotiomycetes</taxon>
        <taxon>Eurotiomycetidae</taxon>
        <taxon>Eurotiales</taxon>
        <taxon>Aspergillaceae</taxon>
        <taxon>Aspergillus</taxon>
        <taxon>Aspergillus subgen. Fumigati</taxon>
    </lineage>
</organism>
<reference key="1">
    <citation type="journal article" date="2008" name="PLoS Genet.">
        <title>Genomic islands in the pathogenic filamentous fungus Aspergillus fumigatus.</title>
        <authorList>
            <person name="Fedorova N.D."/>
            <person name="Khaldi N."/>
            <person name="Joardar V.S."/>
            <person name="Maiti R."/>
            <person name="Amedeo P."/>
            <person name="Anderson M.J."/>
            <person name="Crabtree J."/>
            <person name="Silva J.C."/>
            <person name="Badger J.H."/>
            <person name="Albarraq A."/>
            <person name="Angiuoli S."/>
            <person name="Bussey H."/>
            <person name="Bowyer P."/>
            <person name="Cotty P.J."/>
            <person name="Dyer P.S."/>
            <person name="Egan A."/>
            <person name="Galens K."/>
            <person name="Fraser-Liggett C.M."/>
            <person name="Haas B.J."/>
            <person name="Inman J.M."/>
            <person name="Kent R."/>
            <person name="Lemieux S."/>
            <person name="Malavazi I."/>
            <person name="Orvis J."/>
            <person name="Roemer T."/>
            <person name="Ronning C.M."/>
            <person name="Sundaram J.P."/>
            <person name="Sutton G."/>
            <person name="Turner G."/>
            <person name="Venter J.C."/>
            <person name="White O.R."/>
            <person name="Whitty B.R."/>
            <person name="Youngman P."/>
            <person name="Wolfe K.H."/>
            <person name="Goldman G.H."/>
            <person name="Wortman J.R."/>
            <person name="Jiang B."/>
            <person name="Denning D.W."/>
            <person name="Nierman W.C."/>
        </authorList>
    </citation>
    <scope>NUCLEOTIDE SEQUENCE [LARGE SCALE GENOMIC DNA]</scope>
    <source>
        <strain>CBS 144.89 / FGSC A1163 / CEA10</strain>
    </source>
</reference>
<sequence length="288" mass="30738">MAKFRASNILGDPFALATVSISILAWLIACIASIISDIKTDYPNYSWWAVAYMFCCIMGVTIVFGSDTGLVYGVAVVGYLSTGLVLTTLAVNSLVYADESSSQAAAAGFILMSMVIVVWIFYFGSSPQATHRGFIDSFALNKESSGAYGNRPMSTAYGPRPDTMSTSAPQMYTSAQLNGFETSSPVSGYPGGGPGSENRSSSQARFGNPSASNVAGNNSGQDEVPPPTEYPYKAKAIYSYDANPEDANEISFSKHEILEVSDVSGRWWQARKSNGETGIAPSNYLILL</sequence>
<dbReference type="EMBL" id="DS499597">
    <property type="protein sequence ID" value="EDP51585.1"/>
    <property type="status" value="ALT_INIT"/>
    <property type="molecule type" value="Genomic_DNA"/>
</dbReference>
<dbReference type="SMR" id="B0Y3Z4"/>
<dbReference type="GlyCosmos" id="B0Y3Z4">
    <property type="glycosylation" value="1 site, No reported glycans"/>
</dbReference>
<dbReference type="OrthoDB" id="68163at5052"/>
<dbReference type="Proteomes" id="UP000001699">
    <property type="component" value="Unassembled WGS sequence"/>
</dbReference>
<dbReference type="GO" id="GO:0005886">
    <property type="term" value="C:plasma membrane"/>
    <property type="evidence" value="ECO:0007669"/>
    <property type="project" value="UniProtKB-SubCell"/>
</dbReference>
<dbReference type="GO" id="GO:0030833">
    <property type="term" value="P:regulation of actin filament polymerization"/>
    <property type="evidence" value="ECO:0007669"/>
    <property type="project" value="TreeGrafter"/>
</dbReference>
<dbReference type="CDD" id="cd11855">
    <property type="entry name" value="SH3_Sho1p"/>
    <property type="match status" value="1"/>
</dbReference>
<dbReference type="FunFam" id="2.30.30.40:FF:000213">
    <property type="entry name" value="High osmolarity signaling protein SHO1"/>
    <property type="match status" value="1"/>
</dbReference>
<dbReference type="Gene3D" id="2.30.30.40">
    <property type="entry name" value="SH3 Domains"/>
    <property type="match status" value="1"/>
</dbReference>
<dbReference type="InterPro" id="IPR036028">
    <property type="entry name" value="SH3-like_dom_sf"/>
</dbReference>
<dbReference type="InterPro" id="IPR001452">
    <property type="entry name" value="SH3_domain"/>
</dbReference>
<dbReference type="InterPro" id="IPR035522">
    <property type="entry name" value="Sho1_SH3"/>
</dbReference>
<dbReference type="PANTHER" id="PTHR15735">
    <property type="entry name" value="FCH AND DOUBLE SH3 DOMAINS PROTEIN"/>
    <property type="match status" value="1"/>
</dbReference>
<dbReference type="PANTHER" id="PTHR15735:SF20">
    <property type="entry name" value="HIGH OSMOLARITY SIGNALING PROTEIN SHO1"/>
    <property type="match status" value="1"/>
</dbReference>
<dbReference type="Pfam" id="PF00018">
    <property type="entry name" value="SH3_1"/>
    <property type="match status" value="1"/>
</dbReference>
<dbReference type="PRINTS" id="PR00452">
    <property type="entry name" value="SH3DOMAIN"/>
</dbReference>
<dbReference type="SMART" id="SM00326">
    <property type="entry name" value="SH3"/>
    <property type="match status" value="1"/>
</dbReference>
<dbReference type="SUPFAM" id="SSF50044">
    <property type="entry name" value="SH3-domain"/>
    <property type="match status" value="1"/>
</dbReference>
<dbReference type="PROSITE" id="PS50002">
    <property type="entry name" value="SH3"/>
    <property type="match status" value="1"/>
</dbReference>